<dbReference type="EMBL" id="CP000924">
    <property type="protein sequence ID" value="ABY94664.1"/>
    <property type="molecule type" value="Genomic_DNA"/>
</dbReference>
<dbReference type="RefSeq" id="WP_003868524.1">
    <property type="nucleotide sequence ID" value="NC_010321.1"/>
</dbReference>
<dbReference type="SMR" id="B0K951"/>
<dbReference type="STRING" id="340099.Teth39_1009"/>
<dbReference type="KEGG" id="tpd:Teth39_1009"/>
<dbReference type="eggNOG" id="COG0217">
    <property type="taxonomic scope" value="Bacteria"/>
</dbReference>
<dbReference type="HOGENOM" id="CLU_062974_2_2_9"/>
<dbReference type="Proteomes" id="UP000002156">
    <property type="component" value="Chromosome"/>
</dbReference>
<dbReference type="GO" id="GO:0005829">
    <property type="term" value="C:cytosol"/>
    <property type="evidence" value="ECO:0007669"/>
    <property type="project" value="TreeGrafter"/>
</dbReference>
<dbReference type="GO" id="GO:0003677">
    <property type="term" value="F:DNA binding"/>
    <property type="evidence" value="ECO:0007669"/>
    <property type="project" value="UniProtKB-UniRule"/>
</dbReference>
<dbReference type="GO" id="GO:0006355">
    <property type="term" value="P:regulation of DNA-templated transcription"/>
    <property type="evidence" value="ECO:0007669"/>
    <property type="project" value="UniProtKB-UniRule"/>
</dbReference>
<dbReference type="FunFam" id="1.10.10.200:FF:000002">
    <property type="entry name" value="Probable transcriptional regulatory protein CLM62_37755"/>
    <property type="match status" value="1"/>
</dbReference>
<dbReference type="FunFam" id="3.30.70.980:FF:000002">
    <property type="entry name" value="Probable transcriptional regulatory protein YebC"/>
    <property type="match status" value="1"/>
</dbReference>
<dbReference type="Gene3D" id="1.10.10.200">
    <property type="match status" value="1"/>
</dbReference>
<dbReference type="Gene3D" id="3.30.70.980">
    <property type="match status" value="2"/>
</dbReference>
<dbReference type="HAMAP" id="MF_00693">
    <property type="entry name" value="Transcrip_reg_TACO1"/>
    <property type="match status" value="1"/>
</dbReference>
<dbReference type="InterPro" id="IPR017856">
    <property type="entry name" value="Integrase-like_N"/>
</dbReference>
<dbReference type="InterPro" id="IPR048300">
    <property type="entry name" value="TACO1_YebC-like_2nd/3rd_dom"/>
</dbReference>
<dbReference type="InterPro" id="IPR049083">
    <property type="entry name" value="TACO1_YebC_N"/>
</dbReference>
<dbReference type="InterPro" id="IPR002876">
    <property type="entry name" value="Transcrip_reg_TACO1-like"/>
</dbReference>
<dbReference type="InterPro" id="IPR026564">
    <property type="entry name" value="Transcrip_reg_TACO1-like_dom3"/>
</dbReference>
<dbReference type="InterPro" id="IPR029072">
    <property type="entry name" value="YebC-like"/>
</dbReference>
<dbReference type="NCBIfam" id="NF001030">
    <property type="entry name" value="PRK00110.1"/>
    <property type="match status" value="1"/>
</dbReference>
<dbReference type="NCBIfam" id="NF009044">
    <property type="entry name" value="PRK12378.1"/>
    <property type="match status" value="1"/>
</dbReference>
<dbReference type="NCBIfam" id="TIGR01033">
    <property type="entry name" value="YebC/PmpR family DNA-binding transcriptional regulator"/>
    <property type="match status" value="1"/>
</dbReference>
<dbReference type="PANTHER" id="PTHR12532:SF6">
    <property type="entry name" value="TRANSCRIPTIONAL REGULATORY PROTEIN YEBC-RELATED"/>
    <property type="match status" value="1"/>
</dbReference>
<dbReference type="PANTHER" id="PTHR12532">
    <property type="entry name" value="TRANSLATIONAL ACTIVATOR OF CYTOCHROME C OXIDASE 1"/>
    <property type="match status" value="1"/>
</dbReference>
<dbReference type="Pfam" id="PF20772">
    <property type="entry name" value="TACO1_YebC_N"/>
    <property type="match status" value="1"/>
</dbReference>
<dbReference type="Pfam" id="PF01709">
    <property type="entry name" value="Transcrip_reg"/>
    <property type="match status" value="1"/>
</dbReference>
<dbReference type="SUPFAM" id="SSF75625">
    <property type="entry name" value="YebC-like"/>
    <property type="match status" value="1"/>
</dbReference>
<comment type="subcellular location">
    <subcellularLocation>
        <location evidence="1">Cytoplasm</location>
    </subcellularLocation>
</comment>
<comment type="similarity">
    <text evidence="1">Belongs to the TACO1 family.</text>
</comment>
<sequence length="246" mass="27268">MSGHSKWANIKHKKEKMDAKKGRIFTKLTKDIIKAAKEGGGDPNTNSKLRDAIEKAKANNLPNENIQRAIKKGTGELGGANLEEVIYEGYGPSGTAIIVEALTDNKNRTAGEIRHIFDRHGGSLGAAGSVTWMFDKVGIIIVEKDNSIDEDELAMVAIDAGAQDFSAEDEEFEIITEPSNFQEVKEAIEKAGYKISEAEVTMLPKNTIQLSPEDYEKFEKLIDKLEENDDVQNVYHNVEIEDENDE</sequence>
<gene>
    <name type="ordered locus">Teth39_1009</name>
</gene>
<evidence type="ECO:0000255" key="1">
    <source>
        <dbReference type="HAMAP-Rule" id="MF_00693"/>
    </source>
</evidence>
<evidence type="ECO:0000256" key="2">
    <source>
        <dbReference type="SAM" id="MobiDB-lite"/>
    </source>
</evidence>
<protein>
    <recommendedName>
        <fullName evidence="1">Probable transcriptional regulatory protein Teth39_1009</fullName>
    </recommendedName>
</protein>
<organism>
    <name type="scientific">Thermoanaerobacter pseudethanolicus (strain ATCC 33223 / 39E)</name>
    <name type="common">Clostridium thermohydrosulfuricum</name>
    <dbReference type="NCBI Taxonomy" id="340099"/>
    <lineage>
        <taxon>Bacteria</taxon>
        <taxon>Bacillati</taxon>
        <taxon>Bacillota</taxon>
        <taxon>Clostridia</taxon>
        <taxon>Thermoanaerobacterales</taxon>
        <taxon>Thermoanaerobacteraceae</taxon>
        <taxon>Thermoanaerobacter</taxon>
    </lineage>
</organism>
<name>Y1009_THEP3</name>
<reference key="1">
    <citation type="submission" date="2008-01" db="EMBL/GenBank/DDBJ databases">
        <title>Complete sequence of Thermoanaerobacter pseudethanolicus 39E.</title>
        <authorList>
            <person name="Copeland A."/>
            <person name="Lucas S."/>
            <person name="Lapidus A."/>
            <person name="Barry K."/>
            <person name="Glavina del Rio T."/>
            <person name="Dalin E."/>
            <person name="Tice H."/>
            <person name="Pitluck S."/>
            <person name="Bruce D."/>
            <person name="Goodwin L."/>
            <person name="Saunders E."/>
            <person name="Brettin T."/>
            <person name="Detter J.C."/>
            <person name="Han C."/>
            <person name="Schmutz J."/>
            <person name="Larimer F."/>
            <person name="Land M."/>
            <person name="Hauser L."/>
            <person name="Kyrpides N."/>
            <person name="Lykidis A."/>
            <person name="Hemme C."/>
            <person name="Fields M.W."/>
            <person name="He Z."/>
            <person name="Zhou J."/>
            <person name="Richardson P."/>
        </authorList>
    </citation>
    <scope>NUCLEOTIDE SEQUENCE [LARGE SCALE GENOMIC DNA]</scope>
    <source>
        <strain>ATCC 33223 / DSM 2355 / 39E</strain>
    </source>
</reference>
<feature type="chain" id="PRO_1000132247" description="Probable transcriptional regulatory protein Teth39_1009">
    <location>
        <begin position="1"/>
        <end position="246"/>
    </location>
</feature>
<feature type="region of interest" description="Disordered" evidence="2">
    <location>
        <begin position="1"/>
        <end position="21"/>
    </location>
</feature>
<accession>B0K951</accession>
<proteinExistence type="inferred from homology"/>
<keyword id="KW-0963">Cytoplasm</keyword>
<keyword id="KW-0238">DNA-binding</keyword>
<keyword id="KW-1185">Reference proteome</keyword>
<keyword id="KW-0804">Transcription</keyword>
<keyword id="KW-0805">Transcription regulation</keyword>